<comment type="function">
    <text evidence="1">Alpha N-methyltransferase that methylates the N-terminus of target proteins containing the N-terminal motif [Ala/Pro/Ser]-Pro-Lys when the initiator Met is cleaved. Specifically catalyzes monomethylation of exposed alpha-amino group of Ala or Ser residue in the [Ala/Ser]-Pro-Lys motif and Pro in the Pro-Pro-Lys motif. Predominantly functions as a mono-methyltransferase but is also able to di-/tri-methylate the GPKRIA peptide and di-methylate the PPKRIA peptide (in vitro). May activate NTMT1 by priming its substrates for trimethylation.</text>
</comment>
<comment type="catalytic activity">
    <reaction evidence="1">
        <text>N-terminal L-alanyl-L-prolyl-L-lysyl-[protein] + S-adenosyl-L-methionine = N-terminal N-methyl-L-alanyl-L-prolyl-L-lysyl-[protein] + S-adenosyl-L-homocysteine + H(+)</text>
        <dbReference type="Rhea" id="RHEA:54096"/>
        <dbReference type="Rhea" id="RHEA-COMP:13785"/>
        <dbReference type="Rhea" id="RHEA-COMP:13786"/>
        <dbReference type="ChEBI" id="CHEBI:15378"/>
        <dbReference type="ChEBI" id="CHEBI:57856"/>
        <dbReference type="ChEBI" id="CHEBI:59789"/>
        <dbReference type="ChEBI" id="CHEBI:138057"/>
        <dbReference type="ChEBI" id="CHEBI:138058"/>
        <dbReference type="EC" id="2.1.1.299"/>
    </reaction>
    <physiologicalReaction direction="left-to-right" evidence="1">
        <dbReference type="Rhea" id="RHEA:54097"/>
    </physiologicalReaction>
</comment>
<comment type="catalytic activity">
    <reaction evidence="1">
        <text>N-terminal L-prolyl-L-prolyl-L-lysyl-[protein] + S-adenosyl-L-methionine = N-terminal N-methyl-L-prolyl-L-prolyl-L-lysyl-[protein] + S-adenosyl-L-homocysteine + H(+)</text>
        <dbReference type="Rhea" id="RHEA:54100"/>
        <dbReference type="Rhea" id="RHEA-COMP:13787"/>
        <dbReference type="Rhea" id="RHEA-COMP:13788"/>
        <dbReference type="ChEBI" id="CHEBI:15378"/>
        <dbReference type="ChEBI" id="CHEBI:57856"/>
        <dbReference type="ChEBI" id="CHEBI:59789"/>
        <dbReference type="ChEBI" id="CHEBI:138059"/>
        <dbReference type="ChEBI" id="CHEBI:138060"/>
        <dbReference type="EC" id="2.1.1.299"/>
    </reaction>
    <physiologicalReaction direction="left-to-right" evidence="1">
        <dbReference type="Rhea" id="RHEA:54101"/>
    </physiologicalReaction>
</comment>
<comment type="catalytic activity">
    <reaction evidence="1">
        <text>N-terminal L-seryl-L-prolyl-L-lysyl-[protein] + S-adenosyl-L-methionine = N-terminal N-methyl-L-seryl-L-prolyl-L-lysyl-[protein] + S-adenosyl-L-homocysteine + H(+)</text>
        <dbReference type="Rhea" id="RHEA:54104"/>
        <dbReference type="Rhea" id="RHEA-COMP:13789"/>
        <dbReference type="Rhea" id="RHEA-COMP:13790"/>
        <dbReference type="ChEBI" id="CHEBI:15378"/>
        <dbReference type="ChEBI" id="CHEBI:57856"/>
        <dbReference type="ChEBI" id="CHEBI:59789"/>
        <dbReference type="ChEBI" id="CHEBI:138061"/>
        <dbReference type="ChEBI" id="CHEBI:138062"/>
        <dbReference type="EC" id="2.1.1.299"/>
    </reaction>
    <physiologicalReaction direction="left-to-right" evidence="1">
        <dbReference type="Rhea" id="RHEA:54105"/>
    </physiologicalReaction>
</comment>
<comment type="subcellular location">
    <subcellularLocation>
        <location evidence="1">Nucleus</location>
    </subcellularLocation>
</comment>
<comment type="similarity">
    <text evidence="2">Belongs to the methyltransferase superfamily. NTM1 family.</text>
</comment>
<gene>
    <name type="primary">Ntmt2</name>
    <name evidence="3" type="synonym">Mettl11b</name>
</gene>
<protein>
    <recommendedName>
        <fullName>N-terminal Xaa-Pro-Lys N-methyltransferase 2</fullName>
        <ecNumber evidence="1">2.1.1.299</ecNumber>
    </recommendedName>
    <alternativeName>
        <fullName>Alpha N-terminal protein methyltransferase 1B</fullName>
    </alternativeName>
    <alternativeName>
        <fullName>Methyltransferase-like protein 11B</fullName>
    </alternativeName>
    <alternativeName>
        <fullName>X-Pro-Lys N-terminal protein methyltransferase 1B</fullName>
        <shortName>NTM1B</shortName>
    </alternativeName>
</protein>
<sequence length="283" mass="32312">MAHLGAHFAFRSRWQKTDDELCRHSMSFILHKAIRNDFFQSYLYLLEKIPLVKLYALTSQVIDGEMQFYARAKLFYQEVPATEEGMMGNFIELSNPDIQASREFLRKFVGGPGRAGTGCALDCGSGIGRVSKHVLLPVFSSVELVDMMESFLLEAQSYLQVNENKVESYHCYSLQEFTPHLGRYDVIWIQWVSGYLTDKDLLAFLSRCRDGLKENGVIILKDNVAREGCIFDLSDSSVTRDMDILRSLIRKSGLVVLGQEKQEGFPEQCVPVWMFALHSDRHS</sequence>
<reference key="1">
    <citation type="submission" date="2005-09" db="EMBL/GenBank/DDBJ databases">
        <authorList>
            <person name="Mural R.J."/>
            <person name="Adams M.D."/>
            <person name="Myers E.W."/>
            <person name="Smith H.O."/>
            <person name="Venter J.C."/>
        </authorList>
    </citation>
    <scope>NUCLEOTIDE SEQUENCE [LARGE SCALE GENOMIC DNA]</scope>
</reference>
<accession>D3ZVR1</accession>
<keyword id="KW-0489">Methyltransferase</keyword>
<keyword id="KW-0539">Nucleus</keyword>
<keyword id="KW-1185">Reference proteome</keyword>
<keyword id="KW-0949">S-adenosyl-L-methionine</keyword>
<keyword id="KW-0808">Transferase</keyword>
<name>NTM1B_RAT</name>
<dbReference type="EC" id="2.1.1.299" evidence="1"/>
<dbReference type="EMBL" id="CH473958">
    <property type="protein sequence ID" value="EDM09375.1"/>
    <property type="molecule type" value="Genomic_DNA"/>
</dbReference>
<dbReference type="RefSeq" id="NP_001363789.1">
    <property type="nucleotide sequence ID" value="NM_001376860.1"/>
</dbReference>
<dbReference type="RefSeq" id="XP_001074994.2">
    <property type="nucleotide sequence ID" value="XM_001074994.5"/>
</dbReference>
<dbReference type="RefSeq" id="XP_038946415.1">
    <property type="nucleotide sequence ID" value="XM_039090487.2"/>
</dbReference>
<dbReference type="RefSeq" id="XP_222824.5">
    <property type="nucleotide sequence ID" value="XM_222824.8"/>
</dbReference>
<dbReference type="SMR" id="D3ZVR1"/>
<dbReference type="FunCoup" id="D3ZVR1">
    <property type="interactions" value="44"/>
</dbReference>
<dbReference type="STRING" id="10116.ENSRNOP00000068028"/>
<dbReference type="PhosphoSitePlus" id="D3ZVR1"/>
<dbReference type="PaxDb" id="10116-ENSRNOP00000068028"/>
<dbReference type="Ensembl" id="ENSRNOT00000076404.3">
    <property type="protein sequence ID" value="ENSRNOP00000068028.1"/>
    <property type="gene ID" value="ENSRNOG00000025415.8"/>
</dbReference>
<dbReference type="GeneID" id="289167"/>
<dbReference type="UCSC" id="RGD:1564106">
    <property type="organism name" value="rat"/>
</dbReference>
<dbReference type="AGR" id="RGD:1564106"/>
<dbReference type="RGD" id="1564106">
    <property type="gene designation" value="Ntmt2"/>
</dbReference>
<dbReference type="eggNOG" id="KOG3178">
    <property type="taxonomic scope" value="Eukaryota"/>
</dbReference>
<dbReference type="GeneTree" id="ENSGT00390000008371"/>
<dbReference type="HOGENOM" id="CLU_055356_3_0_1"/>
<dbReference type="InParanoid" id="D3ZVR1"/>
<dbReference type="OMA" id="ETYYCFN"/>
<dbReference type="OrthoDB" id="1298661at2759"/>
<dbReference type="PhylomeDB" id="D3ZVR1"/>
<dbReference type="TreeFam" id="TF314174"/>
<dbReference type="PRO" id="PR:D3ZVR1"/>
<dbReference type="Proteomes" id="UP000002494">
    <property type="component" value="Chromosome 13"/>
</dbReference>
<dbReference type="Proteomes" id="UP000234681">
    <property type="component" value="Chromosome 13"/>
</dbReference>
<dbReference type="Bgee" id="ENSRNOG00000025415">
    <property type="expression patterns" value="Expressed in esophagus and 5 other cell types or tissues"/>
</dbReference>
<dbReference type="ExpressionAtlas" id="D3ZVR1">
    <property type="expression patterns" value="baseline"/>
</dbReference>
<dbReference type="GO" id="GO:0005737">
    <property type="term" value="C:cytoplasm"/>
    <property type="evidence" value="ECO:0000318"/>
    <property type="project" value="GO_Central"/>
</dbReference>
<dbReference type="GO" id="GO:0005634">
    <property type="term" value="C:nucleus"/>
    <property type="evidence" value="ECO:0000250"/>
    <property type="project" value="UniProtKB"/>
</dbReference>
<dbReference type="GO" id="GO:0071885">
    <property type="term" value="F:N-terminal protein N-methyltransferase activity"/>
    <property type="evidence" value="ECO:0000250"/>
    <property type="project" value="UniProtKB"/>
</dbReference>
<dbReference type="GO" id="GO:0006480">
    <property type="term" value="P:N-terminal protein amino acid methylation"/>
    <property type="evidence" value="ECO:0000250"/>
    <property type="project" value="UniProtKB"/>
</dbReference>
<dbReference type="CDD" id="cd02440">
    <property type="entry name" value="AdoMet_MTases"/>
    <property type="match status" value="1"/>
</dbReference>
<dbReference type="FunFam" id="3.40.50.150:FF:000025">
    <property type="entry name" value="N-terminal Xaa-Pro-Lys N-methyltransferase 1"/>
    <property type="match status" value="1"/>
</dbReference>
<dbReference type="Gene3D" id="3.40.50.150">
    <property type="entry name" value="Vaccinia Virus protein VP39"/>
    <property type="match status" value="1"/>
</dbReference>
<dbReference type="InterPro" id="IPR008576">
    <property type="entry name" value="MeTrfase_NTM1"/>
</dbReference>
<dbReference type="InterPro" id="IPR029063">
    <property type="entry name" value="SAM-dependent_MTases_sf"/>
</dbReference>
<dbReference type="PANTHER" id="PTHR12753">
    <property type="entry name" value="AD-003 - RELATED"/>
    <property type="match status" value="1"/>
</dbReference>
<dbReference type="PANTHER" id="PTHR12753:SF2">
    <property type="entry name" value="N-TERMINAL XAA-PRO-LYS N-METHYLTRANSFERASE 2"/>
    <property type="match status" value="1"/>
</dbReference>
<dbReference type="Pfam" id="PF05891">
    <property type="entry name" value="Methyltransf_PK"/>
    <property type="match status" value="1"/>
</dbReference>
<dbReference type="SUPFAM" id="SSF53335">
    <property type="entry name" value="S-adenosyl-L-methionine-dependent methyltransferases"/>
    <property type="match status" value="1"/>
</dbReference>
<evidence type="ECO:0000250" key="1">
    <source>
        <dbReference type="UniProtKB" id="Q5VVY1"/>
    </source>
</evidence>
<evidence type="ECO:0000305" key="2"/>
<evidence type="ECO:0000312" key="3">
    <source>
        <dbReference type="RGD" id="1564106"/>
    </source>
</evidence>
<feature type="chain" id="PRO_0000399780" description="N-terminal Xaa-Pro-Lys N-methyltransferase 2">
    <location>
        <begin position="1"/>
        <end position="283"/>
    </location>
</feature>
<feature type="binding site" evidence="1">
    <location>
        <position position="124"/>
    </location>
    <ligand>
        <name>S-adenosyl-L-methionine</name>
        <dbReference type="ChEBI" id="CHEBI:59789"/>
    </ligand>
</feature>
<feature type="binding site" evidence="1">
    <location>
        <position position="129"/>
    </location>
    <ligand>
        <name>S-adenosyl-L-methionine</name>
        <dbReference type="ChEBI" id="CHEBI:59789"/>
    </ligand>
</feature>
<feature type="binding site" evidence="1">
    <location>
        <position position="146"/>
    </location>
    <ligand>
        <name>S-adenosyl-L-methionine</name>
        <dbReference type="ChEBI" id="CHEBI:59789"/>
    </ligand>
</feature>
<feature type="binding site" evidence="1">
    <location>
        <begin position="174"/>
        <end position="175"/>
    </location>
    <ligand>
        <name>S-adenosyl-L-methionine</name>
        <dbReference type="ChEBI" id="CHEBI:59789"/>
    </ligand>
</feature>
<feature type="binding site" evidence="1">
    <location>
        <position position="190"/>
    </location>
    <ligand>
        <name>S-adenosyl-L-methionine</name>
        <dbReference type="ChEBI" id="CHEBI:59789"/>
    </ligand>
</feature>
<organism>
    <name type="scientific">Rattus norvegicus</name>
    <name type="common">Rat</name>
    <dbReference type="NCBI Taxonomy" id="10116"/>
    <lineage>
        <taxon>Eukaryota</taxon>
        <taxon>Metazoa</taxon>
        <taxon>Chordata</taxon>
        <taxon>Craniata</taxon>
        <taxon>Vertebrata</taxon>
        <taxon>Euteleostomi</taxon>
        <taxon>Mammalia</taxon>
        <taxon>Eutheria</taxon>
        <taxon>Euarchontoglires</taxon>
        <taxon>Glires</taxon>
        <taxon>Rodentia</taxon>
        <taxon>Myomorpha</taxon>
        <taxon>Muroidea</taxon>
        <taxon>Muridae</taxon>
        <taxon>Murinae</taxon>
        <taxon>Rattus</taxon>
    </lineage>
</organism>
<proteinExistence type="inferred from homology"/>